<keyword id="KW-0001">2Fe-2S</keyword>
<keyword id="KW-0963">Cytoplasm</keyword>
<keyword id="KW-0408">Iron</keyword>
<keyword id="KW-0411">Iron-sulfur</keyword>
<keyword id="KW-0479">Metal-binding</keyword>
<keyword id="KW-0560">Oxidoreductase</keyword>
<keyword id="KW-1185">Reference proteome</keyword>
<reference key="1">
    <citation type="journal article" date="2005" name="Science">
        <title>Life at depth: Photobacterium profundum genome sequence and expression analysis.</title>
        <authorList>
            <person name="Vezzi A."/>
            <person name="Campanaro S."/>
            <person name="D'Angelo M."/>
            <person name="Simonato F."/>
            <person name="Vitulo N."/>
            <person name="Lauro F.M."/>
            <person name="Cestaro A."/>
            <person name="Malacrida G."/>
            <person name="Simionati B."/>
            <person name="Cannata N."/>
            <person name="Romualdi C."/>
            <person name="Bartlett D.H."/>
            <person name="Valle G."/>
        </authorList>
    </citation>
    <scope>NUCLEOTIDE SEQUENCE [LARGE SCALE GENOMIC DNA]</scope>
    <source>
        <strain>ATCC BAA-1253 / SS9</strain>
    </source>
</reference>
<evidence type="ECO:0000255" key="1">
    <source>
        <dbReference type="HAMAP-Rule" id="MF_00069"/>
    </source>
</evidence>
<dbReference type="EC" id="1.7.99.1" evidence="1"/>
<dbReference type="EMBL" id="CR378680">
    <property type="protein sequence ID" value="CAG23745.1"/>
    <property type="molecule type" value="Genomic_DNA"/>
</dbReference>
<dbReference type="RefSeq" id="WP_011221885.1">
    <property type="nucleotide sequence ID" value="NC_006371.1"/>
</dbReference>
<dbReference type="SMR" id="Q6LG35"/>
<dbReference type="STRING" id="298386.PBPRB1896"/>
<dbReference type="KEGG" id="ppr:PBPRB1896"/>
<dbReference type="eggNOG" id="COG1151">
    <property type="taxonomic scope" value="Bacteria"/>
</dbReference>
<dbReference type="HOGENOM" id="CLU_038344_2_0_6"/>
<dbReference type="Proteomes" id="UP000000593">
    <property type="component" value="Chromosome 2"/>
</dbReference>
<dbReference type="GO" id="GO:0005737">
    <property type="term" value="C:cytoplasm"/>
    <property type="evidence" value="ECO:0007669"/>
    <property type="project" value="UniProtKB-SubCell"/>
</dbReference>
<dbReference type="GO" id="GO:0051537">
    <property type="term" value="F:2 iron, 2 sulfur cluster binding"/>
    <property type="evidence" value="ECO:0007669"/>
    <property type="project" value="UniProtKB-KW"/>
</dbReference>
<dbReference type="GO" id="GO:0050418">
    <property type="term" value="F:hydroxylamine reductase activity"/>
    <property type="evidence" value="ECO:0007669"/>
    <property type="project" value="UniProtKB-UniRule"/>
</dbReference>
<dbReference type="GO" id="GO:0046872">
    <property type="term" value="F:metal ion binding"/>
    <property type="evidence" value="ECO:0007669"/>
    <property type="project" value="UniProtKB-KW"/>
</dbReference>
<dbReference type="GO" id="GO:0004601">
    <property type="term" value="F:peroxidase activity"/>
    <property type="evidence" value="ECO:0007669"/>
    <property type="project" value="TreeGrafter"/>
</dbReference>
<dbReference type="GO" id="GO:0042542">
    <property type="term" value="P:response to hydrogen peroxide"/>
    <property type="evidence" value="ECO:0007669"/>
    <property type="project" value="TreeGrafter"/>
</dbReference>
<dbReference type="CDD" id="cd01914">
    <property type="entry name" value="HCP"/>
    <property type="match status" value="1"/>
</dbReference>
<dbReference type="FunFam" id="1.20.1270.20:FF:000001">
    <property type="entry name" value="Hydroxylamine reductase"/>
    <property type="match status" value="1"/>
</dbReference>
<dbReference type="FunFam" id="3.40.50.2030:FF:000001">
    <property type="entry name" value="Hydroxylamine reductase"/>
    <property type="match status" value="1"/>
</dbReference>
<dbReference type="FunFam" id="3.40.50.2030:FF:000002">
    <property type="entry name" value="Hydroxylamine reductase"/>
    <property type="match status" value="1"/>
</dbReference>
<dbReference type="Gene3D" id="1.20.1270.20">
    <property type="match status" value="2"/>
</dbReference>
<dbReference type="Gene3D" id="3.40.50.2030">
    <property type="match status" value="2"/>
</dbReference>
<dbReference type="HAMAP" id="MF_00069">
    <property type="entry name" value="Hydroxylam_reduct"/>
    <property type="match status" value="1"/>
</dbReference>
<dbReference type="InterPro" id="IPR004137">
    <property type="entry name" value="HCP/CODH"/>
</dbReference>
<dbReference type="InterPro" id="IPR010048">
    <property type="entry name" value="Hydroxylam_reduct"/>
</dbReference>
<dbReference type="InterPro" id="IPR016099">
    <property type="entry name" value="Prismane-like_a/b-sand"/>
</dbReference>
<dbReference type="InterPro" id="IPR011254">
    <property type="entry name" value="Prismane-like_sf"/>
</dbReference>
<dbReference type="InterPro" id="IPR016100">
    <property type="entry name" value="Prismane_a-bundle"/>
</dbReference>
<dbReference type="NCBIfam" id="TIGR01703">
    <property type="entry name" value="hybrid_clust"/>
    <property type="match status" value="1"/>
</dbReference>
<dbReference type="NCBIfam" id="NF003658">
    <property type="entry name" value="PRK05290.1"/>
    <property type="match status" value="1"/>
</dbReference>
<dbReference type="PANTHER" id="PTHR30109">
    <property type="entry name" value="HYDROXYLAMINE REDUCTASE"/>
    <property type="match status" value="1"/>
</dbReference>
<dbReference type="PANTHER" id="PTHR30109:SF0">
    <property type="entry name" value="HYDROXYLAMINE REDUCTASE"/>
    <property type="match status" value="1"/>
</dbReference>
<dbReference type="Pfam" id="PF03063">
    <property type="entry name" value="Prismane"/>
    <property type="match status" value="1"/>
</dbReference>
<dbReference type="PIRSF" id="PIRSF000076">
    <property type="entry name" value="HCP"/>
    <property type="match status" value="1"/>
</dbReference>
<dbReference type="SUPFAM" id="SSF56821">
    <property type="entry name" value="Prismane protein-like"/>
    <property type="match status" value="1"/>
</dbReference>
<protein>
    <recommendedName>
        <fullName evidence="1">Hydroxylamine reductase</fullName>
        <ecNumber evidence="1">1.7.99.1</ecNumber>
    </recommendedName>
    <alternativeName>
        <fullName evidence="1">Hybrid-cluster protein</fullName>
        <shortName evidence="1">HCP</shortName>
    </alternativeName>
    <alternativeName>
        <fullName evidence="1">Prismane protein</fullName>
    </alternativeName>
</protein>
<sequence>MVCIQCEQTVQTPTAKGCSYTQGMCGKTADVSDLQDVLVFNLQGVSFWAELGRKYNIIDAEIDAWAPRAFFSTLTNVNFVPERITEYTEIAERYKIQLSTQVMAAAAAAGEALPELSPAAQFVLPATAEEIMNFAPEAAVNRGHEELHEDIIGLRLLCLYGLKGAAAYMEHANVLGQSEESICAEYHQIMAFLGTDPTDANALLETSMQIGLLNYRIMEILDRGETNTFGHPQPTQVNVKPVAGKCILVSGHDLHDLEKILQQTEGKGINVYTNGEMLPAHGYPELNKYPHLVGNFGSAWQNQQKEFANFPGAIVMTSNCLINPNVGQYADRLFTRSIVGWPGVVHIEGDDFSQVIECALAQEGIAHTEIEHMITVGFGRNALMAAAPAVINEVKAGNIKHFFLIGGCDGDKEERSYFTDIAVSAPEDSVILTLACGKYRFNKKEFGDINGIPRLLDVGQCNDTYSAIQLVLALAEEFDCGVNELPLSIVLSWFEQKAIVVLLTLFALGIKGIYTGPTAPAFLTDNLIKALQENFDMRSVGDVETDLATMLAGK</sequence>
<accession>Q6LG35</accession>
<proteinExistence type="inferred from homology"/>
<feature type="chain" id="PRO_1000009158" description="Hydroxylamine reductase">
    <location>
        <begin position="1"/>
        <end position="554"/>
    </location>
</feature>
<feature type="binding site" evidence="1">
    <location>
        <position position="3"/>
    </location>
    <ligand>
        <name>[2Fe-2S] cluster</name>
        <dbReference type="ChEBI" id="CHEBI:190135"/>
    </ligand>
</feature>
<feature type="binding site" evidence="1">
    <location>
        <position position="6"/>
    </location>
    <ligand>
        <name>[2Fe-2S] cluster</name>
        <dbReference type="ChEBI" id="CHEBI:190135"/>
    </ligand>
</feature>
<feature type="binding site" evidence="1">
    <location>
        <position position="18"/>
    </location>
    <ligand>
        <name>[2Fe-2S] cluster</name>
        <dbReference type="ChEBI" id="CHEBI:190135"/>
    </ligand>
</feature>
<feature type="binding site" evidence="1">
    <location>
        <position position="25"/>
    </location>
    <ligand>
        <name>[2Fe-2S] cluster</name>
        <dbReference type="ChEBI" id="CHEBI:190135"/>
    </ligand>
</feature>
<feature type="binding site" evidence="1">
    <location>
        <position position="252"/>
    </location>
    <ligand>
        <name>hybrid [4Fe-2O-2S] cluster</name>
        <dbReference type="ChEBI" id="CHEBI:60519"/>
    </ligand>
</feature>
<feature type="binding site" evidence="1">
    <location>
        <position position="276"/>
    </location>
    <ligand>
        <name>hybrid [4Fe-2O-2S] cluster</name>
        <dbReference type="ChEBI" id="CHEBI:60519"/>
    </ligand>
</feature>
<feature type="binding site" evidence="1">
    <location>
        <position position="320"/>
    </location>
    <ligand>
        <name>hybrid [4Fe-2O-2S] cluster</name>
        <dbReference type="ChEBI" id="CHEBI:60519"/>
    </ligand>
</feature>
<feature type="binding site" description="via persulfide group" evidence="1">
    <location>
        <position position="408"/>
    </location>
    <ligand>
        <name>hybrid [4Fe-2O-2S] cluster</name>
        <dbReference type="ChEBI" id="CHEBI:60519"/>
    </ligand>
</feature>
<feature type="binding site" evidence="1">
    <location>
        <position position="436"/>
    </location>
    <ligand>
        <name>hybrid [4Fe-2O-2S] cluster</name>
        <dbReference type="ChEBI" id="CHEBI:60519"/>
    </ligand>
</feature>
<feature type="binding site" evidence="1">
    <location>
        <position position="461"/>
    </location>
    <ligand>
        <name>hybrid [4Fe-2O-2S] cluster</name>
        <dbReference type="ChEBI" id="CHEBI:60519"/>
    </ligand>
</feature>
<feature type="binding site" evidence="1">
    <location>
        <position position="495"/>
    </location>
    <ligand>
        <name>hybrid [4Fe-2O-2S] cluster</name>
        <dbReference type="ChEBI" id="CHEBI:60519"/>
    </ligand>
</feature>
<feature type="binding site" evidence="1">
    <location>
        <position position="497"/>
    </location>
    <ligand>
        <name>hybrid [4Fe-2O-2S] cluster</name>
        <dbReference type="ChEBI" id="CHEBI:60519"/>
    </ligand>
</feature>
<feature type="modified residue" description="Cysteine persulfide" evidence="1">
    <location>
        <position position="408"/>
    </location>
</feature>
<name>HCP_PHOPR</name>
<comment type="function">
    <text evidence="1">Catalyzes the reduction of hydroxylamine to form NH(3) and H(2)O.</text>
</comment>
<comment type="catalytic activity">
    <reaction evidence="1">
        <text>A + NH4(+) + H2O = hydroxylamine + AH2 + H(+)</text>
        <dbReference type="Rhea" id="RHEA:22052"/>
        <dbReference type="ChEBI" id="CHEBI:13193"/>
        <dbReference type="ChEBI" id="CHEBI:15377"/>
        <dbReference type="ChEBI" id="CHEBI:15378"/>
        <dbReference type="ChEBI" id="CHEBI:15429"/>
        <dbReference type="ChEBI" id="CHEBI:17499"/>
        <dbReference type="ChEBI" id="CHEBI:28938"/>
        <dbReference type="EC" id="1.7.99.1"/>
    </reaction>
</comment>
<comment type="cofactor">
    <cofactor evidence="1">
        <name>[2Fe-2S] cluster</name>
        <dbReference type="ChEBI" id="CHEBI:190135"/>
    </cofactor>
    <text evidence="1">Binds 1 [2Fe-2S] cluster.</text>
</comment>
<comment type="cofactor">
    <cofactor evidence="1">
        <name>hybrid [4Fe-2O-2S] cluster</name>
        <dbReference type="ChEBI" id="CHEBI:60519"/>
    </cofactor>
    <text evidence="1">Binds 1 hybrid [4Fe-2O-2S] cluster.</text>
</comment>
<comment type="subcellular location">
    <subcellularLocation>
        <location evidence="1">Cytoplasm</location>
    </subcellularLocation>
</comment>
<comment type="similarity">
    <text evidence="1">Belongs to the HCP family.</text>
</comment>
<gene>
    <name evidence="1" type="primary">hcp</name>
    <name type="ordered locus">PBPRB1896</name>
</gene>
<organism>
    <name type="scientific">Photobacterium profundum (strain SS9)</name>
    <dbReference type="NCBI Taxonomy" id="298386"/>
    <lineage>
        <taxon>Bacteria</taxon>
        <taxon>Pseudomonadati</taxon>
        <taxon>Pseudomonadota</taxon>
        <taxon>Gammaproteobacteria</taxon>
        <taxon>Vibrionales</taxon>
        <taxon>Vibrionaceae</taxon>
        <taxon>Photobacterium</taxon>
    </lineage>
</organism>